<proteinExistence type="inferred from homology"/>
<evidence type="ECO:0000250" key="1">
    <source>
        <dbReference type="UniProtKB" id="P0CC03"/>
    </source>
</evidence>
<evidence type="ECO:0000250" key="2">
    <source>
        <dbReference type="UniProtKB" id="P49891"/>
    </source>
</evidence>
<evidence type="ECO:0000305" key="3"/>
<dbReference type="EC" id="2.8.2.n2"/>
<dbReference type="EMBL" id="AY289782">
    <property type="protein sequence ID" value="AAQ23221.1"/>
    <property type="status" value="ALT_INIT"/>
    <property type="molecule type" value="Genomic_DNA"/>
</dbReference>
<dbReference type="EMBL" id="AY289776">
    <property type="protein sequence ID" value="AAQ23221.1"/>
    <property type="status" value="JOINED"/>
    <property type="molecule type" value="Genomic_DNA"/>
</dbReference>
<dbReference type="EMBL" id="AY289777">
    <property type="protein sequence ID" value="AAQ23221.1"/>
    <property type="status" value="JOINED"/>
    <property type="molecule type" value="Genomic_DNA"/>
</dbReference>
<dbReference type="EMBL" id="AY289778">
    <property type="protein sequence ID" value="AAQ23221.1"/>
    <property type="status" value="JOINED"/>
    <property type="molecule type" value="Genomic_DNA"/>
</dbReference>
<dbReference type="EMBL" id="AY289779">
    <property type="protein sequence ID" value="AAQ23221.1"/>
    <property type="status" value="JOINED"/>
    <property type="molecule type" value="Genomic_DNA"/>
</dbReference>
<dbReference type="EMBL" id="AY289780">
    <property type="protein sequence ID" value="AAQ23221.1"/>
    <property type="status" value="JOINED"/>
    <property type="molecule type" value="Genomic_DNA"/>
</dbReference>
<dbReference type="EMBL" id="AY289781">
    <property type="protein sequence ID" value="AAQ23221.1"/>
    <property type="status" value="JOINED"/>
    <property type="molecule type" value="Genomic_DNA"/>
</dbReference>
<dbReference type="SMR" id="Q6WG18"/>
<dbReference type="FunCoup" id="Q6WG18">
    <property type="interactions" value="417"/>
</dbReference>
<dbReference type="STRING" id="9598.ENSPTRP00000020325"/>
<dbReference type="PaxDb" id="9598-ENSPTRP00000020325"/>
<dbReference type="eggNOG" id="KOG1584">
    <property type="taxonomic scope" value="Eukaryota"/>
</dbReference>
<dbReference type="InParanoid" id="Q6WG18"/>
<dbReference type="Proteomes" id="UP000002277">
    <property type="component" value="Unplaced"/>
</dbReference>
<dbReference type="GO" id="GO:0005737">
    <property type="term" value="C:cytoplasm"/>
    <property type="evidence" value="ECO:0000318"/>
    <property type="project" value="GO_Central"/>
</dbReference>
<dbReference type="GO" id="GO:0005829">
    <property type="term" value="C:cytosol"/>
    <property type="evidence" value="ECO:0007669"/>
    <property type="project" value="UniProtKB-SubCell"/>
</dbReference>
<dbReference type="GO" id="GO:0008146">
    <property type="term" value="F:sulfotransferase activity"/>
    <property type="evidence" value="ECO:0007669"/>
    <property type="project" value="InterPro"/>
</dbReference>
<dbReference type="GO" id="GO:0051923">
    <property type="term" value="P:sulfation"/>
    <property type="evidence" value="ECO:0000318"/>
    <property type="project" value="GO_Central"/>
</dbReference>
<dbReference type="FunFam" id="3.40.50.300:FF:002302">
    <property type="entry name" value="Sulfotransferase"/>
    <property type="match status" value="1"/>
</dbReference>
<dbReference type="Gene3D" id="3.40.50.300">
    <property type="entry name" value="P-loop containing nucleotide triphosphate hydrolases"/>
    <property type="match status" value="1"/>
</dbReference>
<dbReference type="InterPro" id="IPR027417">
    <property type="entry name" value="P-loop_NTPase"/>
</dbReference>
<dbReference type="InterPro" id="IPR000863">
    <property type="entry name" value="Sulfotransferase_dom"/>
</dbReference>
<dbReference type="PANTHER" id="PTHR11783">
    <property type="entry name" value="SULFOTRANSFERASE SULT"/>
    <property type="match status" value="1"/>
</dbReference>
<dbReference type="Pfam" id="PF00685">
    <property type="entry name" value="Sulfotransfer_1"/>
    <property type="match status" value="1"/>
</dbReference>
<dbReference type="SUPFAM" id="SSF52540">
    <property type="entry name" value="P-loop containing nucleoside triphosphate hydrolases"/>
    <property type="match status" value="1"/>
</dbReference>
<comment type="function">
    <text evidence="1">Sulfotransferase that utilizes 3'-phospho-5'-adenylyl sulfate (PAPS) as sulfonate donor to catalyze the sulfate conjugation of thyroxine. Involved in the metabolism of thyroxine (By similarity).</text>
</comment>
<comment type="catalytic activity">
    <reaction evidence="1">
        <text>thyroxine + 3'-phosphoadenylyl sulfate = thyroxine sulfate + adenosine 3',5'-bisphosphate + H(+)</text>
        <dbReference type="Rhea" id="RHEA:26422"/>
        <dbReference type="ChEBI" id="CHEBI:15378"/>
        <dbReference type="ChEBI" id="CHEBI:58339"/>
        <dbReference type="ChEBI" id="CHEBI:58343"/>
        <dbReference type="ChEBI" id="CHEBI:58910"/>
        <dbReference type="ChEBI" id="CHEBI:305790"/>
        <dbReference type="EC" id="2.8.2.n2"/>
    </reaction>
</comment>
<comment type="subcellular location">
    <subcellularLocation>
        <location evidence="1">Cytoplasm</location>
        <location evidence="1">Cytosol</location>
    </subcellularLocation>
</comment>
<comment type="similarity">
    <text evidence="3">Belongs to the sulfotransferase 1 family.</text>
</comment>
<comment type="sequence caution" evidence="3">
    <conflict type="erroneous initiation">
        <sequence resource="EMBL-CDS" id="AAQ23221"/>
    </conflict>
</comment>
<feature type="chain" id="PRO_0000085172" description="Sulfotransferase 6B1">
    <location>
        <begin position="1"/>
        <end position="303"/>
    </location>
</feature>
<feature type="active site" description="Proton acceptor" evidence="2">
    <location>
        <position position="118"/>
    </location>
</feature>
<feature type="binding site" evidence="2">
    <location>
        <begin position="65"/>
        <end position="70"/>
    </location>
    <ligand>
        <name>3'-phosphoadenylyl sulfate</name>
        <dbReference type="ChEBI" id="CHEBI:58339"/>
    </ligand>
</feature>
<feature type="binding site" evidence="2">
    <location>
        <position position="140"/>
    </location>
    <ligand>
        <name>3'-phosphoadenylyl sulfate</name>
        <dbReference type="ChEBI" id="CHEBI:58339"/>
    </ligand>
</feature>
<feature type="binding site" evidence="2">
    <location>
        <position position="148"/>
    </location>
    <ligand>
        <name>3'-phosphoadenylyl sulfate</name>
        <dbReference type="ChEBI" id="CHEBI:58339"/>
    </ligand>
</feature>
<feature type="binding site" evidence="2">
    <location>
        <position position="203"/>
    </location>
    <ligand>
        <name>3'-phosphoadenylyl sulfate</name>
        <dbReference type="ChEBI" id="CHEBI:58339"/>
    </ligand>
</feature>
<feature type="binding site" evidence="2">
    <location>
        <begin position="237"/>
        <end position="242"/>
    </location>
    <ligand>
        <name>3'-phosphoadenylyl sulfate</name>
        <dbReference type="ChEBI" id="CHEBI:58339"/>
    </ligand>
</feature>
<feature type="binding site" evidence="2">
    <location>
        <begin position="259"/>
        <end position="261"/>
    </location>
    <ligand>
        <name>3'-phosphoadenylyl sulfate</name>
        <dbReference type="ChEBI" id="CHEBI:58339"/>
    </ligand>
</feature>
<accession>Q6WG18</accession>
<name>ST6B1_PANTR</name>
<sequence>MADKSKFIEYIDEALEKSKETALSHLFFTYQGIPYPITMCTSETFQALDTFEARHDDIVLASYPKCGSNWILHIVSELIYAVSKKKYEYPEFPVLECGDSEKYQRMKGFPSPRILATHLHYDKLPGSIFKNKAKILVIFRNPKDTAVSFFHFHNDVPDIPSYGSWDEFFRQLMKGQVSWGSYFDFAINWNKHLDGDNVKFILYEDLKENLAAGIKQIAEFLGFFLTGEQIQTISVQSTFQAMRAKSQDTHGAVGPFLFRKGEVGDWKNLFGEIQNQEMDEKFKECLAGTSLGAKLKYESYCQG</sequence>
<reference key="1">
    <citation type="journal article" date="2004" name="Pharmacogenomics J.">
        <title>Human cytosolic sulfotransferase database mining: identification of seven novel genes and pseudogenes.</title>
        <authorList>
            <person name="Freimuth R.R."/>
            <person name="Wiepert M."/>
            <person name="Chute C.G."/>
            <person name="Wieben E.D."/>
            <person name="Weinshilboum R.M."/>
        </authorList>
    </citation>
    <scope>NUCLEOTIDE SEQUENCE [GENOMIC DNA]</scope>
</reference>
<protein>
    <recommendedName>
        <fullName>Sulfotransferase 6B1</fullName>
        <shortName>ST6B1</shortName>
    </recommendedName>
    <alternativeName>
        <fullName>Thyroxine sulfotransferase</fullName>
        <ecNumber>2.8.2.n2</ecNumber>
    </alternativeName>
</protein>
<gene>
    <name type="primary">SULT6B1</name>
</gene>
<organism>
    <name type="scientific">Pan troglodytes</name>
    <name type="common">Chimpanzee</name>
    <dbReference type="NCBI Taxonomy" id="9598"/>
    <lineage>
        <taxon>Eukaryota</taxon>
        <taxon>Metazoa</taxon>
        <taxon>Chordata</taxon>
        <taxon>Craniata</taxon>
        <taxon>Vertebrata</taxon>
        <taxon>Euteleostomi</taxon>
        <taxon>Mammalia</taxon>
        <taxon>Eutheria</taxon>
        <taxon>Euarchontoglires</taxon>
        <taxon>Primates</taxon>
        <taxon>Haplorrhini</taxon>
        <taxon>Catarrhini</taxon>
        <taxon>Hominidae</taxon>
        <taxon>Pan</taxon>
    </lineage>
</organism>
<keyword id="KW-0963">Cytoplasm</keyword>
<keyword id="KW-1185">Reference proteome</keyword>
<keyword id="KW-0808">Transferase</keyword>